<feature type="chain" id="PRO_1000024745" description="Adenosylhomocysteinase">
    <location>
        <begin position="1"/>
        <end position="476"/>
    </location>
</feature>
<feature type="binding site" evidence="1">
    <location>
        <position position="67"/>
    </location>
    <ligand>
        <name>substrate</name>
    </ligand>
</feature>
<feature type="binding site" evidence="1">
    <location>
        <position position="142"/>
    </location>
    <ligand>
        <name>substrate</name>
    </ligand>
</feature>
<feature type="binding site" evidence="1">
    <location>
        <position position="202"/>
    </location>
    <ligand>
        <name>substrate</name>
    </ligand>
</feature>
<feature type="binding site" evidence="1">
    <location>
        <begin position="203"/>
        <end position="205"/>
    </location>
    <ligand>
        <name>NAD(+)</name>
        <dbReference type="ChEBI" id="CHEBI:57540"/>
    </ligand>
</feature>
<feature type="binding site" evidence="1">
    <location>
        <position position="232"/>
    </location>
    <ligand>
        <name>substrate</name>
    </ligand>
</feature>
<feature type="binding site" evidence="1">
    <location>
        <position position="236"/>
    </location>
    <ligand>
        <name>substrate</name>
    </ligand>
</feature>
<feature type="binding site" evidence="1">
    <location>
        <position position="237"/>
    </location>
    <ligand>
        <name>NAD(+)</name>
        <dbReference type="ChEBI" id="CHEBI:57540"/>
    </ligand>
</feature>
<feature type="binding site" evidence="1">
    <location>
        <begin position="266"/>
        <end position="271"/>
    </location>
    <ligand>
        <name>NAD(+)</name>
        <dbReference type="ChEBI" id="CHEBI:57540"/>
    </ligand>
</feature>
<feature type="binding site" evidence="1">
    <location>
        <position position="289"/>
    </location>
    <ligand>
        <name>NAD(+)</name>
        <dbReference type="ChEBI" id="CHEBI:57540"/>
    </ligand>
</feature>
<feature type="binding site" evidence="1">
    <location>
        <position position="324"/>
    </location>
    <ligand>
        <name>NAD(+)</name>
        <dbReference type="ChEBI" id="CHEBI:57540"/>
    </ligand>
</feature>
<feature type="binding site" evidence="1">
    <location>
        <begin position="345"/>
        <end position="347"/>
    </location>
    <ligand>
        <name>NAD(+)</name>
        <dbReference type="ChEBI" id="CHEBI:57540"/>
    </ligand>
</feature>
<feature type="binding site" evidence="1">
    <location>
        <position position="390"/>
    </location>
    <ligand>
        <name>NAD(+)</name>
        <dbReference type="ChEBI" id="CHEBI:57540"/>
    </ligand>
</feature>
<dbReference type="EC" id="3.13.2.1" evidence="1"/>
<dbReference type="EMBL" id="CP000554">
    <property type="protein sequence ID" value="ABM76930.1"/>
    <property type="molecule type" value="Genomic_DNA"/>
</dbReference>
<dbReference type="RefSeq" id="WP_011824861.1">
    <property type="nucleotide sequence ID" value="NC_008820.1"/>
</dbReference>
<dbReference type="SMR" id="A2C620"/>
<dbReference type="STRING" id="59922.P9303_01751"/>
<dbReference type="KEGG" id="pmf:P9303_01751"/>
<dbReference type="HOGENOM" id="CLU_025194_2_1_3"/>
<dbReference type="BioCyc" id="PMAR59922:G1G80-170-MONOMER"/>
<dbReference type="UniPathway" id="UPA00314">
    <property type="reaction ID" value="UER00076"/>
</dbReference>
<dbReference type="Proteomes" id="UP000002274">
    <property type="component" value="Chromosome"/>
</dbReference>
<dbReference type="GO" id="GO:0005829">
    <property type="term" value="C:cytosol"/>
    <property type="evidence" value="ECO:0007669"/>
    <property type="project" value="TreeGrafter"/>
</dbReference>
<dbReference type="GO" id="GO:0004013">
    <property type="term" value="F:adenosylhomocysteinase activity"/>
    <property type="evidence" value="ECO:0007669"/>
    <property type="project" value="UniProtKB-UniRule"/>
</dbReference>
<dbReference type="GO" id="GO:0071269">
    <property type="term" value="P:L-homocysteine biosynthetic process"/>
    <property type="evidence" value="ECO:0007669"/>
    <property type="project" value="UniProtKB-UniRule"/>
</dbReference>
<dbReference type="GO" id="GO:0006730">
    <property type="term" value="P:one-carbon metabolic process"/>
    <property type="evidence" value="ECO:0007669"/>
    <property type="project" value="UniProtKB-KW"/>
</dbReference>
<dbReference type="GO" id="GO:0033353">
    <property type="term" value="P:S-adenosylmethionine cycle"/>
    <property type="evidence" value="ECO:0007669"/>
    <property type="project" value="TreeGrafter"/>
</dbReference>
<dbReference type="CDD" id="cd00401">
    <property type="entry name" value="SAHH"/>
    <property type="match status" value="1"/>
</dbReference>
<dbReference type="FunFam" id="3.40.50.720:FF:000004">
    <property type="entry name" value="Adenosylhomocysteinase"/>
    <property type="match status" value="1"/>
</dbReference>
<dbReference type="Gene3D" id="3.40.50.1480">
    <property type="entry name" value="Adenosylhomocysteinase-like"/>
    <property type="match status" value="1"/>
</dbReference>
<dbReference type="Gene3D" id="3.40.50.720">
    <property type="entry name" value="NAD(P)-binding Rossmann-like Domain"/>
    <property type="match status" value="1"/>
</dbReference>
<dbReference type="HAMAP" id="MF_00563">
    <property type="entry name" value="AdoHcyase"/>
    <property type="match status" value="1"/>
</dbReference>
<dbReference type="InterPro" id="IPR042172">
    <property type="entry name" value="Adenosylhomocyst_ase-like_sf"/>
</dbReference>
<dbReference type="InterPro" id="IPR000043">
    <property type="entry name" value="Adenosylhomocysteinase-like"/>
</dbReference>
<dbReference type="InterPro" id="IPR015878">
    <property type="entry name" value="Ado_hCys_hydrolase_NAD-bd"/>
</dbReference>
<dbReference type="InterPro" id="IPR036291">
    <property type="entry name" value="NAD(P)-bd_dom_sf"/>
</dbReference>
<dbReference type="InterPro" id="IPR020082">
    <property type="entry name" value="S-Ado-L-homoCys_hydrolase_CS"/>
</dbReference>
<dbReference type="NCBIfam" id="TIGR00936">
    <property type="entry name" value="ahcY"/>
    <property type="match status" value="1"/>
</dbReference>
<dbReference type="NCBIfam" id="NF004005">
    <property type="entry name" value="PRK05476.2-3"/>
    <property type="match status" value="1"/>
</dbReference>
<dbReference type="PANTHER" id="PTHR23420">
    <property type="entry name" value="ADENOSYLHOMOCYSTEINASE"/>
    <property type="match status" value="1"/>
</dbReference>
<dbReference type="PANTHER" id="PTHR23420:SF0">
    <property type="entry name" value="ADENOSYLHOMOCYSTEINASE"/>
    <property type="match status" value="1"/>
</dbReference>
<dbReference type="Pfam" id="PF05221">
    <property type="entry name" value="AdoHcyase"/>
    <property type="match status" value="1"/>
</dbReference>
<dbReference type="Pfam" id="PF00670">
    <property type="entry name" value="AdoHcyase_NAD"/>
    <property type="match status" value="1"/>
</dbReference>
<dbReference type="PIRSF" id="PIRSF001109">
    <property type="entry name" value="Ad_hcy_hydrolase"/>
    <property type="match status" value="1"/>
</dbReference>
<dbReference type="SMART" id="SM00996">
    <property type="entry name" value="AdoHcyase"/>
    <property type="match status" value="1"/>
</dbReference>
<dbReference type="SMART" id="SM00997">
    <property type="entry name" value="AdoHcyase_NAD"/>
    <property type="match status" value="1"/>
</dbReference>
<dbReference type="SUPFAM" id="SSF52283">
    <property type="entry name" value="Formate/glycerate dehydrogenase catalytic domain-like"/>
    <property type="match status" value="1"/>
</dbReference>
<dbReference type="SUPFAM" id="SSF51735">
    <property type="entry name" value="NAD(P)-binding Rossmann-fold domains"/>
    <property type="match status" value="1"/>
</dbReference>
<dbReference type="PROSITE" id="PS00738">
    <property type="entry name" value="ADOHCYASE_1"/>
    <property type="match status" value="1"/>
</dbReference>
<dbReference type="PROSITE" id="PS00739">
    <property type="entry name" value="ADOHCYASE_2"/>
    <property type="match status" value="1"/>
</dbReference>
<comment type="function">
    <text evidence="1">May play a key role in the regulation of the intracellular concentration of adenosylhomocysteine.</text>
</comment>
<comment type="catalytic activity">
    <reaction evidence="1">
        <text>S-adenosyl-L-homocysteine + H2O = L-homocysteine + adenosine</text>
        <dbReference type="Rhea" id="RHEA:21708"/>
        <dbReference type="ChEBI" id="CHEBI:15377"/>
        <dbReference type="ChEBI" id="CHEBI:16335"/>
        <dbReference type="ChEBI" id="CHEBI:57856"/>
        <dbReference type="ChEBI" id="CHEBI:58199"/>
        <dbReference type="EC" id="3.13.2.1"/>
    </reaction>
</comment>
<comment type="cofactor">
    <cofactor evidence="1">
        <name>NAD(+)</name>
        <dbReference type="ChEBI" id="CHEBI:57540"/>
    </cofactor>
    <text evidence="1">Binds 1 NAD(+) per subunit.</text>
</comment>
<comment type="pathway">
    <text evidence="1">Amino-acid biosynthesis; L-homocysteine biosynthesis; L-homocysteine from S-adenosyl-L-homocysteine: step 1/1.</text>
</comment>
<comment type="subcellular location">
    <subcellularLocation>
        <location evidence="1">Cytoplasm</location>
    </subcellularLocation>
</comment>
<comment type="similarity">
    <text evidence="1">Belongs to the adenosylhomocysteinase family.</text>
</comment>
<keyword id="KW-0963">Cytoplasm</keyword>
<keyword id="KW-0378">Hydrolase</keyword>
<keyword id="KW-0520">NAD</keyword>
<keyword id="KW-0554">One-carbon metabolism</keyword>
<accession>A2C620</accession>
<gene>
    <name evidence="1" type="primary">ahcY</name>
    <name type="ordered locus">P9303_01751</name>
</gene>
<proteinExistence type="inferred from homology"/>
<organism>
    <name type="scientific">Prochlorococcus marinus (strain MIT 9303)</name>
    <dbReference type="NCBI Taxonomy" id="59922"/>
    <lineage>
        <taxon>Bacteria</taxon>
        <taxon>Bacillati</taxon>
        <taxon>Cyanobacteriota</taxon>
        <taxon>Cyanophyceae</taxon>
        <taxon>Synechococcales</taxon>
        <taxon>Prochlorococcaceae</taxon>
        <taxon>Prochlorococcus</taxon>
    </lineage>
</organism>
<reference key="1">
    <citation type="journal article" date="2007" name="PLoS Genet.">
        <title>Patterns and implications of gene gain and loss in the evolution of Prochlorococcus.</title>
        <authorList>
            <person name="Kettler G.C."/>
            <person name="Martiny A.C."/>
            <person name="Huang K."/>
            <person name="Zucker J."/>
            <person name="Coleman M.L."/>
            <person name="Rodrigue S."/>
            <person name="Chen F."/>
            <person name="Lapidus A."/>
            <person name="Ferriera S."/>
            <person name="Johnson J."/>
            <person name="Steglich C."/>
            <person name="Church G.M."/>
            <person name="Richardson P."/>
            <person name="Chisholm S.W."/>
        </authorList>
    </citation>
    <scope>NUCLEOTIDE SEQUENCE [LARGE SCALE GENOMIC DNA]</scope>
    <source>
        <strain>MIT 9303</strain>
    </source>
</reference>
<name>SAHH_PROM3</name>
<protein>
    <recommendedName>
        <fullName evidence="1">Adenosylhomocysteinase</fullName>
        <ecNumber evidence="1">3.13.2.1</ecNumber>
    </recommendedName>
    <alternativeName>
        <fullName evidence="1">S-adenosyl-L-homocysteine hydrolase</fullName>
        <shortName evidence="1">AdoHcyase</shortName>
    </alternativeName>
</protein>
<evidence type="ECO:0000255" key="1">
    <source>
        <dbReference type="HAMAP-Rule" id="MF_00563"/>
    </source>
</evidence>
<sequence>MVAVPTSMASLQAPPQYVVADIDLADFGRKELSIAETEMPGLMALRVKHGSEKPLKGARIAGSLHMTIQTGVLIETLVALGADVRWASCNIFSTQDHAAAAIAASGVPVFATKGETLDEYWAYTHRILEWGDGGTPNMILDDGGDATGLVMLGSKAESDSSVLDNPGNEEETALFASIRTKLAQDSSFYSRIKSNIQGVTEETTTGVARLYQMQKSGELPFPAINVNDSVTKSKFDNLYGCRESLVDGIKRATDVMVAGKVALVMGYGDVGKGSAQSLRGLGATVMIAEIDPICALQAAMEGYRVVRLDEVVQDVDIFVTSTGNFQVIRHEHLIRMKDEAIVCNIGHFDNEIDVASLKDYSWENIKPQVDHITLPSGNKIILLAEGRLVNLGCATGHPSFVMSNSFTNQVLAQIELFSKGDKYADQVYVLPKHLDEMVARLHLEKIGARLTELTKQQADYISVPIEGPYKPDHYRY</sequence>